<accession>Q6DAM1</accession>
<feature type="chain" id="PRO_0000336392" description="Thiamine-phosphate synthase">
    <location>
        <begin position="1"/>
        <end position="213"/>
    </location>
</feature>
<feature type="binding site" evidence="1">
    <location>
        <begin position="38"/>
        <end position="42"/>
    </location>
    <ligand>
        <name>4-amino-2-methyl-5-(diphosphooxymethyl)pyrimidine</name>
        <dbReference type="ChEBI" id="CHEBI:57841"/>
    </ligand>
</feature>
<feature type="binding site" evidence="1">
    <location>
        <position position="70"/>
    </location>
    <ligand>
        <name>4-amino-2-methyl-5-(diphosphooxymethyl)pyrimidine</name>
        <dbReference type="ChEBI" id="CHEBI:57841"/>
    </ligand>
</feature>
<feature type="binding site" evidence="1">
    <location>
        <position position="71"/>
    </location>
    <ligand>
        <name>Mg(2+)</name>
        <dbReference type="ChEBI" id="CHEBI:18420"/>
    </ligand>
</feature>
<feature type="binding site" evidence="1">
    <location>
        <position position="90"/>
    </location>
    <ligand>
        <name>Mg(2+)</name>
        <dbReference type="ChEBI" id="CHEBI:18420"/>
    </ligand>
</feature>
<feature type="binding site" evidence="1">
    <location>
        <position position="109"/>
    </location>
    <ligand>
        <name>4-amino-2-methyl-5-(diphosphooxymethyl)pyrimidine</name>
        <dbReference type="ChEBI" id="CHEBI:57841"/>
    </ligand>
</feature>
<feature type="binding site" evidence="1">
    <location>
        <begin position="135"/>
        <end position="137"/>
    </location>
    <ligand>
        <name>2-[(2R,5Z)-2-carboxy-4-methylthiazol-5(2H)-ylidene]ethyl phosphate</name>
        <dbReference type="ChEBI" id="CHEBI:62899"/>
    </ligand>
</feature>
<feature type="binding site" evidence="1">
    <location>
        <position position="138"/>
    </location>
    <ligand>
        <name>4-amino-2-methyl-5-(diphosphooxymethyl)pyrimidine</name>
        <dbReference type="ChEBI" id="CHEBI:57841"/>
    </ligand>
</feature>
<feature type="binding site" evidence="1">
    <location>
        <position position="168"/>
    </location>
    <ligand>
        <name>2-[(2R,5Z)-2-carboxy-4-methylthiazol-5(2H)-ylidene]ethyl phosphate</name>
        <dbReference type="ChEBI" id="CHEBI:62899"/>
    </ligand>
</feature>
<feature type="binding site" evidence="1">
    <location>
        <begin position="188"/>
        <end position="189"/>
    </location>
    <ligand>
        <name>2-[(2R,5Z)-2-carboxy-4-methylthiazol-5(2H)-ylidene]ethyl phosphate</name>
        <dbReference type="ChEBI" id="CHEBI:62899"/>
    </ligand>
</feature>
<dbReference type="EC" id="2.5.1.3" evidence="1"/>
<dbReference type="EMBL" id="BX950851">
    <property type="protein sequence ID" value="CAG73151.1"/>
    <property type="molecule type" value="Genomic_DNA"/>
</dbReference>
<dbReference type="RefSeq" id="WP_011091869.1">
    <property type="nucleotide sequence ID" value="NC_004547.2"/>
</dbReference>
<dbReference type="SMR" id="Q6DAM1"/>
<dbReference type="STRING" id="218491.ECA0231"/>
<dbReference type="GeneID" id="57207098"/>
<dbReference type="KEGG" id="eca:ECA0231"/>
<dbReference type="PATRIC" id="fig|218491.5.peg.233"/>
<dbReference type="eggNOG" id="COG0352">
    <property type="taxonomic scope" value="Bacteria"/>
</dbReference>
<dbReference type="HOGENOM" id="CLU_018272_3_3_6"/>
<dbReference type="OrthoDB" id="9810880at2"/>
<dbReference type="UniPathway" id="UPA00060">
    <property type="reaction ID" value="UER00141"/>
</dbReference>
<dbReference type="Proteomes" id="UP000007966">
    <property type="component" value="Chromosome"/>
</dbReference>
<dbReference type="GO" id="GO:0005737">
    <property type="term" value="C:cytoplasm"/>
    <property type="evidence" value="ECO:0007669"/>
    <property type="project" value="TreeGrafter"/>
</dbReference>
<dbReference type="GO" id="GO:0000287">
    <property type="term" value="F:magnesium ion binding"/>
    <property type="evidence" value="ECO:0007669"/>
    <property type="project" value="UniProtKB-UniRule"/>
</dbReference>
<dbReference type="GO" id="GO:0004789">
    <property type="term" value="F:thiamine-phosphate diphosphorylase activity"/>
    <property type="evidence" value="ECO:0007669"/>
    <property type="project" value="UniProtKB-UniRule"/>
</dbReference>
<dbReference type="GO" id="GO:0009228">
    <property type="term" value="P:thiamine biosynthetic process"/>
    <property type="evidence" value="ECO:0007669"/>
    <property type="project" value="UniProtKB-KW"/>
</dbReference>
<dbReference type="GO" id="GO:0009229">
    <property type="term" value="P:thiamine diphosphate biosynthetic process"/>
    <property type="evidence" value="ECO:0007669"/>
    <property type="project" value="UniProtKB-UniRule"/>
</dbReference>
<dbReference type="CDD" id="cd00564">
    <property type="entry name" value="TMP_TenI"/>
    <property type="match status" value="1"/>
</dbReference>
<dbReference type="FunFam" id="3.20.20.70:FF:000064">
    <property type="entry name" value="Thiamine-phosphate synthase"/>
    <property type="match status" value="1"/>
</dbReference>
<dbReference type="Gene3D" id="3.20.20.70">
    <property type="entry name" value="Aldolase class I"/>
    <property type="match status" value="1"/>
</dbReference>
<dbReference type="HAMAP" id="MF_00097">
    <property type="entry name" value="TMP_synthase"/>
    <property type="match status" value="1"/>
</dbReference>
<dbReference type="InterPro" id="IPR013785">
    <property type="entry name" value="Aldolase_TIM"/>
</dbReference>
<dbReference type="InterPro" id="IPR036206">
    <property type="entry name" value="ThiamineP_synth_sf"/>
</dbReference>
<dbReference type="InterPro" id="IPR022998">
    <property type="entry name" value="ThiamineP_synth_TenI"/>
</dbReference>
<dbReference type="InterPro" id="IPR034291">
    <property type="entry name" value="TMP_synthase"/>
</dbReference>
<dbReference type="NCBIfam" id="NF002904">
    <property type="entry name" value="PRK03512.1"/>
    <property type="match status" value="1"/>
</dbReference>
<dbReference type="NCBIfam" id="TIGR00693">
    <property type="entry name" value="thiE"/>
    <property type="match status" value="1"/>
</dbReference>
<dbReference type="PANTHER" id="PTHR20857">
    <property type="entry name" value="THIAMINE-PHOSPHATE PYROPHOSPHORYLASE"/>
    <property type="match status" value="1"/>
</dbReference>
<dbReference type="PANTHER" id="PTHR20857:SF15">
    <property type="entry name" value="THIAMINE-PHOSPHATE SYNTHASE"/>
    <property type="match status" value="1"/>
</dbReference>
<dbReference type="Pfam" id="PF02581">
    <property type="entry name" value="TMP-TENI"/>
    <property type="match status" value="1"/>
</dbReference>
<dbReference type="SUPFAM" id="SSF51391">
    <property type="entry name" value="Thiamin phosphate synthase"/>
    <property type="match status" value="1"/>
</dbReference>
<comment type="function">
    <text evidence="1">Condenses 4-methyl-5-(beta-hydroxyethyl)thiazole monophosphate (THZ-P) and 2-methyl-4-amino-5-hydroxymethyl pyrimidine pyrophosphate (HMP-PP) to form thiamine monophosphate (TMP).</text>
</comment>
<comment type="catalytic activity">
    <reaction evidence="1">
        <text>2-[(2R,5Z)-2-carboxy-4-methylthiazol-5(2H)-ylidene]ethyl phosphate + 4-amino-2-methyl-5-(diphosphooxymethyl)pyrimidine + 2 H(+) = thiamine phosphate + CO2 + diphosphate</text>
        <dbReference type="Rhea" id="RHEA:47844"/>
        <dbReference type="ChEBI" id="CHEBI:15378"/>
        <dbReference type="ChEBI" id="CHEBI:16526"/>
        <dbReference type="ChEBI" id="CHEBI:33019"/>
        <dbReference type="ChEBI" id="CHEBI:37575"/>
        <dbReference type="ChEBI" id="CHEBI:57841"/>
        <dbReference type="ChEBI" id="CHEBI:62899"/>
        <dbReference type="EC" id="2.5.1.3"/>
    </reaction>
</comment>
<comment type="catalytic activity">
    <reaction evidence="1">
        <text>2-(2-carboxy-4-methylthiazol-5-yl)ethyl phosphate + 4-amino-2-methyl-5-(diphosphooxymethyl)pyrimidine + 2 H(+) = thiamine phosphate + CO2 + diphosphate</text>
        <dbReference type="Rhea" id="RHEA:47848"/>
        <dbReference type="ChEBI" id="CHEBI:15378"/>
        <dbReference type="ChEBI" id="CHEBI:16526"/>
        <dbReference type="ChEBI" id="CHEBI:33019"/>
        <dbReference type="ChEBI" id="CHEBI:37575"/>
        <dbReference type="ChEBI" id="CHEBI:57841"/>
        <dbReference type="ChEBI" id="CHEBI:62890"/>
        <dbReference type="EC" id="2.5.1.3"/>
    </reaction>
</comment>
<comment type="catalytic activity">
    <reaction evidence="1">
        <text>4-methyl-5-(2-phosphooxyethyl)-thiazole + 4-amino-2-methyl-5-(diphosphooxymethyl)pyrimidine + H(+) = thiamine phosphate + diphosphate</text>
        <dbReference type="Rhea" id="RHEA:22328"/>
        <dbReference type="ChEBI" id="CHEBI:15378"/>
        <dbReference type="ChEBI" id="CHEBI:33019"/>
        <dbReference type="ChEBI" id="CHEBI:37575"/>
        <dbReference type="ChEBI" id="CHEBI:57841"/>
        <dbReference type="ChEBI" id="CHEBI:58296"/>
        <dbReference type="EC" id="2.5.1.3"/>
    </reaction>
</comment>
<comment type="cofactor">
    <cofactor evidence="1">
        <name>Mg(2+)</name>
        <dbReference type="ChEBI" id="CHEBI:18420"/>
    </cofactor>
    <text evidence="1">Binds 1 Mg(2+) ion per subunit.</text>
</comment>
<comment type="pathway">
    <text evidence="1">Cofactor biosynthesis; thiamine diphosphate biosynthesis; thiamine phosphate from 4-amino-2-methyl-5-diphosphomethylpyrimidine and 4-methyl-5-(2-phosphoethyl)-thiazole: step 1/1.</text>
</comment>
<comment type="similarity">
    <text evidence="1">Belongs to the thiamine-phosphate synthase family.</text>
</comment>
<keyword id="KW-0460">Magnesium</keyword>
<keyword id="KW-0479">Metal-binding</keyword>
<keyword id="KW-1185">Reference proteome</keyword>
<keyword id="KW-0784">Thiamine biosynthesis</keyword>
<keyword id="KW-0808">Transferase</keyword>
<reference key="1">
    <citation type="journal article" date="2004" name="Proc. Natl. Acad. Sci. U.S.A.">
        <title>Genome sequence of the enterobacterial phytopathogen Erwinia carotovora subsp. atroseptica and characterization of virulence factors.</title>
        <authorList>
            <person name="Bell K.S."/>
            <person name="Sebaihia M."/>
            <person name="Pritchard L."/>
            <person name="Holden M.T.G."/>
            <person name="Hyman L.J."/>
            <person name="Holeva M.C."/>
            <person name="Thomson N.R."/>
            <person name="Bentley S.D."/>
            <person name="Churcher L.J.C."/>
            <person name="Mungall K."/>
            <person name="Atkin R."/>
            <person name="Bason N."/>
            <person name="Brooks K."/>
            <person name="Chillingworth T."/>
            <person name="Clark K."/>
            <person name="Doggett J."/>
            <person name="Fraser A."/>
            <person name="Hance Z."/>
            <person name="Hauser H."/>
            <person name="Jagels K."/>
            <person name="Moule S."/>
            <person name="Norbertczak H."/>
            <person name="Ormond D."/>
            <person name="Price C."/>
            <person name="Quail M.A."/>
            <person name="Sanders M."/>
            <person name="Walker D."/>
            <person name="Whitehead S."/>
            <person name="Salmond G.P.C."/>
            <person name="Birch P.R.J."/>
            <person name="Parkhill J."/>
            <person name="Toth I.K."/>
        </authorList>
    </citation>
    <scope>NUCLEOTIDE SEQUENCE [LARGE SCALE GENOMIC DNA]</scope>
    <source>
        <strain>SCRI 1043 / ATCC BAA-672</strain>
    </source>
</reference>
<gene>
    <name evidence="1" type="primary">thiE</name>
    <name type="ordered locus">ECA0231</name>
</gene>
<protein>
    <recommendedName>
        <fullName evidence="1">Thiamine-phosphate synthase</fullName>
        <shortName evidence="1">TP synthase</shortName>
        <shortName evidence="1">TPS</shortName>
        <ecNumber evidence="1">2.5.1.3</ecNumber>
    </recommendedName>
    <alternativeName>
        <fullName evidence="1">Thiamine-phosphate pyrophosphorylase</fullName>
        <shortName evidence="1">TMP pyrophosphorylase</shortName>
        <shortName evidence="1">TMP-PPase</shortName>
    </alternativeName>
</protein>
<name>THIE_PECAS</name>
<sequence>MTDSTPFAPTAQRLGLYPVVDSVEWIERLLGVGVKTIQLRIKDRSDEQAETDVIQAIALGSRYQAQLFINDYWTLAVKHQAYGVHLGQEDLDTADLAAIKKAGLRLGVSTHYDRELARAVAINPSYIALGHIFPTQTKDMPSAPQGLAELTRHIADLQGRFPTVAIGGISIDRVPAVLATGVGSIAVVSAITQAPDWRQATATLLKMIEGREA</sequence>
<evidence type="ECO:0000255" key="1">
    <source>
        <dbReference type="HAMAP-Rule" id="MF_00097"/>
    </source>
</evidence>
<organism>
    <name type="scientific">Pectobacterium atrosepticum (strain SCRI 1043 / ATCC BAA-672)</name>
    <name type="common">Erwinia carotovora subsp. atroseptica</name>
    <dbReference type="NCBI Taxonomy" id="218491"/>
    <lineage>
        <taxon>Bacteria</taxon>
        <taxon>Pseudomonadati</taxon>
        <taxon>Pseudomonadota</taxon>
        <taxon>Gammaproteobacteria</taxon>
        <taxon>Enterobacterales</taxon>
        <taxon>Pectobacteriaceae</taxon>
        <taxon>Pectobacterium</taxon>
    </lineage>
</organism>
<proteinExistence type="inferred from homology"/>